<name>RL362_SACEN</name>
<sequence>MKVQPSVKRICDKCQVIRRHGRVLVICDNQRHKQRQG</sequence>
<accession>A4FPJ6</accession>
<feature type="chain" id="PRO_0000344713" description="Large ribosomal subunit protein bL36B">
    <location>
        <begin position="1"/>
        <end position="37"/>
    </location>
</feature>
<gene>
    <name evidence="1" type="primary">rpmJ2</name>
    <name type="ordered locus">SACE_6807</name>
</gene>
<protein>
    <recommendedName>
        <fullName evidence="1">Large ribosomal subunit protein bL36B</fullName>
    </recommendedName>
    <alternativeName>
        <fullName evidence="2">50S ribosomal protein L36 2</fullName>
    </alternativeName>
</protein>
<proteinExistence type="inferred from homology"/>
<reference key="1">
    <citation type="journal article" date="2007" name="Nat. Biotechnol.">
        <title>Complete genome sequence of the erythromycin-producing bacterium Saccharopolyspora erythraea NRRL23338.</title>
        <authorList>
            <person name="Oliynyk M."/>
            <person name="Samborskyy M."/>
            <person name="Lester J.B."/>
            <person name="Mironenko T."/>
            <person name="Scott N."/>
            <person name="Dickens S."/>
            <person name="Haydock S.F."/>
            <person name="Leadlay P.F."/>
        </authorList>
    </citation>
    <scope>NUCLEOTIDE SEQUENCE [LARGE SCALE GENOMIC DNA]</scope>
    <source>
        <strain>ATCC 11635 / DSM 40517 / JCM 4748 / NBRC 13426 / NCIMB 8594 / NRRL 2338</strain>
    </source>
</reference>
<organism>
    <name type="scientific">Saccharopolyspora erythraea (strain ATCC 11635 / DSM 40517 / JCM 4748 / NBRC 13426 / NCIMB 8594 / NRRL 2338)</name>
    <dbReference type="NCBI Taxonomy" id="405948"/>
    <lineage>
        <taxon>Bacteria</taxon>
        <taxon>Bacillati</taxon>
        <taxon>Actinomycetota</taxon>
        <taxon>Actinomycetes</taxon>
        <taxon>Pseudonocardiales</taxon>
        <taxon>Pseudonocardiaceae</taxon>
        <taxon>Saccharopolyspora</taxon>
    </lineage>
</organism>
<dbReference type="EMBL" id="AM420293">
    <property type="protein sequence ID" value="CAM05971.1"/>
    <property type="molecule type" value="Genomic_DNA"/>
</dbReference>
<dbReference type="RefSeq" id="WP_009948666.1">
    <property type="nucleotide sequence ID" value="NC_009142.1"/>
</dbReference>
<dbReference type="SMR" id="A4FPJ6"/>
<dbReference type="STRING" id="405948.SACE_6807"/>
<dbReference type="KEGG" id="sen:SACE_6807"/>
<dbReference type="eggNOG" id="COG0257">
    <property type="taxonomic scope" value="Bacteria"/>
</dbReference>
<dbReference type="HOGENOM" id="CLU_135723_6_2_11"/>
<dbReference type="OrthoDB" id="9802520at2"/>
<dbReference type="Proteomes" id="UP000006728">
    <property type="component" value="Chromosome"/>
</dbReference>
<dbReference type="GO" id="GO:0005737">
    <property type="term" value="C:cytoplasm"/>
    <property type="evidence" value="ECO:0007669"/>
    <property type="project" value="UniProtKB-ARBA"/>
</dbReference>
<dbReference type="GO" id="GO:1990904">
    <property type="term" value="C:ribonucleoprotein complex"/>
    <property type="evidence" value="ECO:0007669"/>
    <property type="project" value="UniProtKB-KW"/>
</dbReference>
<dbReference type="GO" id="GO:0005840">
    <property type="term" value="C:ribosome"/>
    <property type="evidence" value="ECO:0007669"/>
    <property type="project" value="UniProtKB-KW"/>
</dbReference>
<dbReference type="GO" id="GO:0003735">
    <property type="term" value="F:structural constituent of ribosome"/>
    <property type="evidence" value="ECO:0007669"/>
    <property type="project" value="InterPro"/>
</dbReference>
<dbReference type="GO" id="GO:0006412">
    <property type="term" value="P:translation"/>
    <property type="evidence" value="ECO:0007669"/>
    <property type="project" value="UniProtKB-UniRule"/>
</dbReference>
<dbReference type="HAMAP" id="MF_00251">
    <property type="entry name" value="Ribosomal_bL36"/>
    <property type="match status" value="1"/>
</dbReference>
<dbReference type="InterPro" id="IPR000473">
    <property type="entry name" value="Ribosomal_bL36"/>
</dbReference>
<dbReference type="InterPro" id="IPR035977">
    <property type="entry name" value="Ribosomal_bL36_sp"/>
</dbReference>
<dbReference type="NCBIfam" id="TIGR01022">
    <property type="entry name" value="rpmJ_bact"/>
    <property type="match status" value="1"/>
</dbReference>
<dbReference type="PANTHER" id="PTHR42888">
    <property type="entry name" value="50S RIBOSOMAL PROTEIN L36, CHLOROPLASTIC"/>
    <property type="match status" value="1"/>
</dbReference>
<dbReference type="PANTHER" id="PTHR42888:SF1">
    <property type="entry name" value="LARGE RIBOSOMAL SUBUNIT PROTEIN BL36C"/>
    <property type="match status" value="1"/>
</dbReference>
<dbReference type="Pfam" id="PF00444">
    <property type="entry name" value="Ribosomal_L36"/>
    <property type="match status" value="1"/>
</dbReference>
<dbReference type="SUPFAM" id="SSF57840">
    <property type="entry name" value="Ribosomal protein L36"/>
    <property type="match status" value="1"/>
</dbReference>
<dbReference type="PROSITE" id="PS00828">
    <property type="entry name" value="RIBOSOMAL_L36"/>
    <property type="match status" value="1"/>
</dbReference>
<comment type="similarity">
    <text evidence="1">Belongs to the bacterial ribosomal protein bL36 family.</text>
</comment>
<evidence type="ECO:0000255" key="1">
    <source>
        <dbReference type="HAMAP-Rule" id="MF_00251"/>
    </source>
</evidence>
<evidence type="ECO:0000305" key="2"/>
<keyword id="KW-1185">Reference proteome</keyword>
<keyword id="KW-0687">Ribonucleoprotein</keyword>
<keyword id="KW-0689">Ribosomal protein</keyword>